<comment type="catalytic activity">
    <reaction evidence="1">
        <text>(2R)-3-phosphoglycerate + ATP = (2R)-3-phospho-glyceroyl phosphate + ADP</text>
        <dbReference type="Rhea" id="RHEA:14801"/>
        <dbReference type="ChEBI" id="CHEBI:30616"/>
        <dbReference type="ChEBI" id="CHEBI:57604"/>
        <dbReference type="ChEBI" id="CHEBI:58272"/>
        <dbReference type="ChEBI" id="CHEBI:456216"/>
        <dbReference type="EC" id="2.7.2.3"/>
    </reaction>
</comment>
<comment type="pathway">
    <text evidence="1">Carbohydrate degradation; glycolysis; pyruvate from D-glyceraldehyde 3-phosphate: step 2/5.</text>
</comment>
<comment type="subunit">
    <text evidence="1">Monomer.</text>
</comment>
<comment type="subcellular location">
    <subcellularLocation>
        <location evidence="1">Cytoplasm</location>
    </subcellularLocation>
</comment>
<comment type="similarity">
    <text evidence="1">Belongs to the phosphoglycerate kinase family.</text>
</comment>
<name>PGK_PICP2</name>
<reference key="1">
    <citation type="submission" date="2008-02" db="EMBL/GenBank/DDBJ databases">
        <title>Complete sequence of Synechococcus sp. PCC 7002.</title>
        <authorList>
            <person name="Li T."/>
            <person name="Zhao J."/>
            <person name="Zhao C."/>
            <person name="Liu Z."/>
            <person name="Zhao F."/>
            <person name="Marquardt J."/>
            <person name="Nomura C.T."/>
            <person name="Persson S."/>
            <person name="Detter J.C."/>
            <person name="Richardson P.M."/>
            <person name="Lanz C."/>
            <person name="Schuster S.C."/>
            <person name="Wang J."/>
            <person name="Li S."/>
            <person name="Huang X."/>
            <person name="Cai T."/>
            <person name="Yu Z."/>
            <person name="Luo J."/>
            <person name="Zhao J."/>
            <person name="Bryant D.A."/>
        </authorList>
    </citation>
    <scope>NUCLEOTIDE SEQUENCE [LARGE SCALE GENOMIC DNA]</scope>
    <source>
        <strain>ATCC 27264 / PCC 7002 / PR-6</strain>
    </source>
</reference>
<protein>
    <recommendedName>
        <fullName evidence="1">Phosphoglycerate kinase</fullName>
        <ecNumber evidence="1">2.7.2.3</ecNumber>
    </recommendedName>
</protein>
<accession>B1XNQ1</accession>
<feature type="chain" id="PRO_1000096387" description="Phosphoglycerate kinase">
    <location>
        <begin position="1"/>
        <end position="398"/>
    </location>
</feature>
<feature type="binding site" evidence="1">
    <location>
        <begin position="24"/>
        <end position="26"/>
    </location>
    <ligand>
        <name>substrate</name>
    </ligand>
</feature>
<feature type="binding site" evidence="1">
    <location>
        <position position="40"/>
    </location>
    <ligand>
        <name>substrate</name>
    </ligand>
</feature>
<feature type="binding site" evidence="1">
    <location>
        <begin position="63"/>
        <end position="66"/>
    </location>
    <ligand>
        <name>substrate</name>
    </ligand>
</feature>
<feature type="binding site" evidence="1">
    <location>
        <position position="122"/>
    </location>
    <ligand>
        <name>substrate</name>
    </ligand>
</feature>
<feature type="binding site" evidence="1">
    <location>
        <position position="155"/>
    </location>
    <ligand>
        <name>substrate</name>
    </ligand>
</feature>
<feature type="binding site" evidence="1">
    <location>
        <position position="206"/>
    </location>
    <ligand>
        <name>ATP</name>
        <dbReference type="ChEBI" id="CHEBI:30616"/>
    </ligand>
</feature>
<feature type="binding site" evidence="1">
    <location>
        <position position="294"/>
    </location>
    <ligand>
        <name>ATP</name>
        <dbReference type="ChEBI" id="CHEBI:30616"/>
    </ligand>
</feature>
<feature type="binding site" evidence="1">
    <location>
        <position position="325"/>
    </location>
    <ligand>
        <name>ATP</name>
        <dbReference type="ChEBI" id="CHEBI:30616"/>
    </ligand>
</feature>
<feature type="binding site" evidence="1">
    <location>
        <begin position="354"/>
        <end position="357"/>
    </location>
    <ligand>
        <name>ATP</name>
        <dbReference type="ChEBI" id="CHEBI:30616"/>
    </ligand>
</feature>
<proteinExistence type="inferred from homology"/>
<organism>
    <name type="scientific">Picosynechococcus sp. (strain ATCC 27264 / PCC 7002 / PR-6)</name>
    <name type="common">Agmenellum quadruplicatum</name>
    <dbReference type="NCBI Taxonomy" id="32049"/>
    <lineage>
        <taxon>Bacteria</taxon>
        <taxon>Bacillati</taxon>
        <taxon>Cyanobacteriota</taxon>
        <taxon>Cyanophyceae</taxon>
        <taxon>Oscillatoriophycideae</taxon>
        <taxon>Chroococcales</taxon>
        <taxon>Geminocystaceae</taxon>
        <taxon>Picosynechococcus</taxon>
    </lineage>
</organism>
<sequence>MAKKSVANLTEADLSGKRVFVRVDFNVPLNESGVITDDTRIRAALPTIKYLTEKGAKVILGSHMGRPKGQVVDSMRLTPVAARLSELLGQSVTKCDDCVGDAVNQAIANLGNGQVALLENLRFNPGEEKNDPEFAKQLAANADIYVNDAFGTAHRAHGSTEGVTHHVDTSVAGLLIEKELQFLKGAIEAPKRPLVAIVGGSKVSSKIGVIETLLEKCDKLLIGGGMIFTFYKAQGKSVGGSLVEDDKIDLAKSLMEKAQGKILLPTDVIVADKFAPDAEAKTVSVDAIPDGWMGLDIGADSVKVFQEALDGCGTAIWNGPMGVFEFDKFAVGTEAIAKTLAGATETGTVTIIGGGDSVAAVEKVGVADKMSHISTGGGASLELLEGKELPGIVALDDA</sequence>
<dbReference type="EC" id="2.7.2.3" evidence="1"/>
<dbReference type="EMBL" id="CP000951">
    <property type="protein sequence ID" value="ACA99576.1"/>
    <property type="molecule type" value="Genomic_DNA"/>
</dbReference>
<dbReference type="RefSeq" id="WP_012307199.1">
    <property type="nucleotide sequence ID" value="NZ_JAHHPU010000002.1"/>
</dbReference>
<dbReference type="SMR" id="B1XNQ1"/>
<dbReference type="STRING" id="32049.SYNPCC7002_A1585"/>
<dbReference type="KEGG" id="syp:SYNPCC7002_A1585"/>
<dbReference type="eggNOG" id="COG0126">
    <property type="taxonomic scope" value="Bacteria"/>
</dbReference>
<dbReference type="HOGENOM" id="CLU_025427_0_2_3"/>
<dbReference type="UniPathway" id="UPA00109">
    <property type="reaction ID" value="UER00185"/>
</dbReference>
<dbReference type="Proteomes" id="UP000001688">
    <property type="component" value="Chromosome"/>
</dbReference>
<dbReference type="GO" id="GO:0005829">
    <property type="term" value="C:cytosol"/>
    <property type="evidence" value="ECO:0007669"/>
    <property type="project" value="TreeGrafter"/>
</dbReference>
<dbReference type="GO" id="GO:0043531">
    <property type="term" value="F:ADP binding"/>
    <property type="evidence" value="ECO:0007669"/>
    <property type="project" value="TreeGrafter"/>
</dbReference>
<dbReference type="GO" id="GO:0005524">
    <property type="term" value="F:ATP binding"/>
    <property type="evidence" value="ECO:0007669"/>
    <property type="project" value="UniProtKB-KW"/>
</dbReference>
<dbReference type="GO" id="GO:0004618">
    <property type="term" value="F:phosphoglycerate kinase activity"/>
    <property type="evidence" value="ECO:0007669"/>
    <property type="project" value="UniProtKB-UniRule"/>
</dbReference>
<dbReference type="GO" id="GO:0006094">
    <property type="term" value="P:gluconeogenesis"/>
    <property type="evidence" value="ECO:0007669"/>
    <property type="project" value="TreeGrafter"/>
</dbReference>
<dbReference type="GO" id="GO:0006096">
    <property type="term" value="P:glycolytic process"/>
    <property type="evidence" value="ECO:0007669"/>
    <property type="project" value="UniProtKB-UniRule"/>
</dbReference>
<dbReference type="CDD" id="cd00318">
    <property type="entry name" value="Phosphoglycerate_kinase"/>
    <property type="match status" value="1"/>
</dbReference>
<dbReference type="FunFam" id="3.40.50.1260:FF:000003">
    <property type="entry name" value="Phosphoglycerate kinase"/>
    <property type="match status" value="1"/>
</dbReference>
<dbReference type="FunFam" id="3.40.50.1260:FF:000006">
    <property type="entry name" value="Phosphoglycerate kinase"/>
    <property type="match status" value="1"/>
</dbReference>
<dbReference type="Gene3D" id="3.40.50.1260">
    <property type="entry name" value="Phosphoglycerate kinase, N-terminal domain"/>
    <property type="match status" value="2"/>
</dbReference>
<dbReference type="HAMAP" id="MF_00145">
    <property type="entry name" value="Phosphoglyc_kinase"/>
    <property type="match status" value="1"/>
</dbReference>
<dbReference type="InterPro" id="IPR001576">
    <property type="entry name" value="Phosphoglycerate_kinase"/>
</dbReference>
<dbReference type="InterPro" id="IPR015911">
    <property type="entry name" value="Phosphoglycerate_kinase_CS"/>
</dbReference>
<dbReference type="InterPro" id="IPR015824">
    <property type="entry name" value="Phosphoglycerate_kinase_N"/>
</dbReference>
<dbReference type="InterPro" id="IPR036043">
    <property type="entry name" value="Phosphoglycerate_kinase_sf"/>
</dbReference>
<dbReference type="PANTHER" id="PTHR11406">
    <property type="entry name" value="PHOSPHOGLYCERATE KINASE"/>
    <property type="match status" value="1"/>
</dbReference>
<dbReference type="PANTHER" id="PTHR11406:SF23">
    <property type="entry name" value="PHOSPHOGLYCERATE KINASE 1, CHLOROPLASTIC-RELATED"/>
    <property type="match status" value="1"/>
</dbReference>
<dbReference type="Pfam" id="PF00162">
    <property type="entry name" value="PGK"/>
    <property type="match status" value="1"/>
</dbReference>
<dbReference type="PIRSF" id="PIRSF000724">
    <property type="entry name" value="Pgk"/>
    <property type="match status" value="1"/>
</dbReference>
<dbReference type="PRINTS" id="PR00477">
    <property type="entry name" value="PHGLYCKINASE"/>
</dbReference>
<dbReference type="SUPFAM" id="SSF53748">
    <property type="entry name" value="Phosphoglycerate kinase"/>
    <property type="match status" value="1"/>
</dbReference>
<dbReference type="PROSITE" id="PS00111">
    <property type="entry name" value="PGLYCERATE_KINASE"/>
    <property type="match status" value="1"/>
</dbReference>
<keyword id="KW-0067">ATP-binding</keyword>
<keyword id="KW-0963">Cytoplasm</keyword>
<keyword id="KW-0324">Glycolysis</keyword>
<keyword id="KW-0418">Kinase</keyword>
<keyword id="KW-0547">Nucleotide-binding</keyword>
<keyword id="KW-1185">Reference proteome</keyword>
<keyword id="KW-0808">Transferase</keyword>
<gene>
    <name evidence="1" type="primary">pgk</name>
    <name type="ordered locus">SYNPCC7002_A1585</name>
</gene>
<evidence type="ECO:0000255" key="1">
    <source>
        <dbReference type="HAMAP-Rule" id="MF_00145"/>
    </source>
</evidence>